<feature type="chain" id="PRO_0000208454" description="Choline-phosphate cytidylyltransferase A">
    <location>
        <begin position="1"/>
        <end position="367"/>
    </location>
</feature>
<feature type="repeat" description="1">
    <location>
        <begin position="319"/>
        <end position="324"/>
    </location>
</feature>
<feature type="repeat" description="2; approximate">
    <location>
        <begin position="329"/>
        <end position="333"/>
    </location>
</feature>
<feature type="repeat" description="3">
    <location>
        <begin position="343"/>
        <end position="348"/>
    </location>
</feature>
<feature type="region of interest" description="Disordered" evidence="4">
    <location>
        <begin position="1"/>
        <end position="32"/>
    </location>
</feature>
<feature type="region of interest" description="Amphipathic" evidence="3">
    <location>
        <begin position="228"/>
        <end position="287"/>
    </location>
</feature>
<feature type="region of interest" description="Autoinhibitory (AI)" evidence="1">
    <location>
        <begin position="272"/>
        <end position="293"/>
    </location>
</feature>
<feature type="region of interest" description="Amphipathic" evidence="3">
    <location>
        <begin position="298"/>
        <end position="315"/>
    </location>
</feature>
<feature type="region of interest" description="Disordered" evidence="4">
    <location>
        <begin position="313"/>
        <end position="367"/>
    </location>
</feature>
<feature type="region of interest" description="3 X repeats">
    <location>
        <begin position="319"/>
        <end position="348"/>
    </location>
</feature>
<feature type="compositionally biased region" description="Polar residues" evidence="4">
    <location>
        <begin position="315"/>
        <end position="324"/>
    </location>
</feature>
<feature type="compositionally biased region" description="Low complexity" evidence="4">
    <location>
        <begin position="330"/>
        <end position="352"/>
    </location>
</feature>
<feature type="binding site" evidence="1">
    <location>
        <position position="84"/>
    </location>
    <ligand>
        <name>CTP</name>
        <dbReference type="ChEBI" id="CHEBI:37563"/>
    </ligand>
</feature>
<feature type="binding site" evidence="1">
    <location>
        <position position="85"/>
    </location>
    <ligand>
        <name>CTP</name>
        <dbReference type="ChEBI" id="CHEBI:37563"/>
    </ligand>
</feature>
<feature type="binding site" evidence="1">
    <location>
        <position position="92"/>
    </location>
    <ligand>
        <name>CTP</name>
        <dbReference type="ChEBI" id="CHEBI:37563"/>
    </ligand>
</feature>
<feature type="binding site" evidence="1">
    <location>
        <position position="122"/>
    </location>
    <ligand>
        <name>CTP</name>
        <dbReference type="ChEBI" id="CHEBI:37563"/>
    </ligand>
</feature>
<feature type="binding site" evidence="1">
    <location>
        <position position="122"/>
    </location>
    <ligand>
        <name>phosphocholine</name>
        <dbReference type="ChEBI" id="CHEBI:295975"/>
    </ligand>
</feature>
<feature type="binding site" evidence="1">
    <location>
        <position position="151"/>
    </location>
    <ligand>
        <name>phosphocholine</name>
        <dbReference type="ChEBI" id="CHEBI:295975"/>
    </ligand>
</feature>
<feature type="binding site" evidence="1">
    <location>
        <position position="168"/>
    </location>
    <ligand>
        <name>CTP</name>
        <dbReference type="ChEBI" id="CHEBI:37563"/>
    </ligand>
</feature>
<feature type="binding site" evidence="1">
    <location>
        <position position="169"/>
    </location>
    <ligand>
        <name>CTP</name>
        <dbReference type="ChEBI" id="CHEBI:37563"/>
    </ligand>
</feature>
<feature type="binding site" evidence="1">
    <location>
        <position position="173"/>
    </location>
    <ligand>
        <name>CTP</name>
        <dbReference type="ChEBI" id="CHEBI:37563"/>
    </ligand>
</feature>
<feature type="binding site" evidence="1">
    <location>
        <position position="195"/>
    </location>
    <ligand>
        <name>CTP</name>
        <dbReference type="ChEBI" id="CHEBI:37563"/>
    </ligand>
</feature>
<feature type="binding site" evidence="1">
    <location>
        <position position="196"/>
    </location>
    <ligand>
        <name>CTP</name>
        <dbReference type="ChEBI" id="CHEBI:37563"/>
    </ligand>
</feature>
<feature type="binding site" evidence="1">
    <location>
        <position position="197"/>
    </location>
    <ligand>
        <name>CTP</name>
        <dbReference type="ChEBI" id="CHEBI:37563"/>
    </ligand>
</feature>
<feature type="binding site" evidence="1">
    <location>
        <position position="200"/>
    </location>
    <ligand>
        <name>CTP</name>
        <dbReference type="ChEBI" id="CHEBI:37563"/>
    </ligand>
</feature>
<feature type="modified residue" description="N-acetylmethionine" evidence="2">
    <location>
        <position position="1"/>
    </location>
</feature>
<feature type="modified residue" description="N6-acetyllysine" evidence="2">
    <location>
        <position position="8"/>
    </location>
</feature>
<feature type="modified residue" description="Phosphoserine" evidence="2">
    <location>
        <position position="233"/>
    </location>
</feature>
<feature type="modified residue" description="Phosphoserine" evidence="12">
    <location>
        <position position="315"/>
    </location>
</feature>
<feature type="modified residue" description="Phosphoserine" evidence="12">
    <location>
        <position position="319"/>
    </location>
</feature>
<feature type="modified residue" description="Phosphoserine" evidence="1">
    <location>
        <position position="321"/>
    </location>
</feature>
<feature type="modified residue" description="Phosphoserine" evidence="1">
    <location>
        <position position="322"/>
    </location>
</feature>
<feature type="modified residue" description="Phosphoserine" evidence="12">
    <location>
        <position position="323"/>
    </location>
</feature>
<feature type="modified residue" description="Phosphothreonine" evidence="12">
    <location>
        <position position="325"/>
    </location>
</feature>
<feature type="modified residue" description="Phosphoserine" evidence="1">
    <location>
        <position position="329"/>
    </location>
</feature>
<feature type="modified residue" description="Phosphoserine" evidence="12">
    <location>
        <position position="331"/>
    </location>
</feature>
<feature type="modified residue" description="Phosphoserine" evidence="1">
    <location>
        <position position="333"/>
    </location>
</feature>
<feature type="modified residue" description="Phosphothreonine" evidence="12">
    <location>
        <position position="342"/>
    </location>
</feature>
<feature type="modified residue" description="Phosphoserine" evidence="12">
    <location>
        <position position="343"/>
    </location>
</feature>
<feature type="modified residue" description="Phosphoserine" evidence="1">
    <location>
        <position position="345"/>
    </location>
</feature>
<feature type="modified residue" description="Phosphoserine" evidence="1">
    <location>
        <position position="346"/>
    </location>
</feature>
<feature type="modified residue" description="Phosphoserine" evidence="10 12">
    <location>
        <position position="347"/>
    </location>
</feature>
<feature type="modified residue" description="Phosphoserine" evidence="1">
    <location>
        <position position="350"/>
    </location>
</feature>
<feature type="modified residue" description="Phosphoserine" evidence="2">
    <location>
        <position position="352"/>
    </location>
</feature>
<feature type="modified residue" description="Phosphothreonine" evidence="12">
    <location>
        <position position="358"/>
    </location>
</feature>
<feature type="modified residue" description="Phosphoserine" evidence="11 12">
    <location>
        <position position="362"/>
    </location>
</feature>
<feature type="sequence conflict" description="In Ref. 2; AAA53526." evidence="9" ref="2">
    <original>D</original>
    <variation>V</variation>
    <location>
        <position position="360"/>
    </location>
</feature>
<reference key="1">
    <citation type="journal article" date="1993" name="Genomics">
        <title>The gene for murine CTP:phosphocholine cytidylyltransferase (Ctpct) is located on mouse chromosome 16.</title>
        <authorList>
            <person name="Rutherford M.S."/>
            <person name="Rock C.O."/>
            <person name="Jenkins N.A."/>
            <person name="Gilbert D.J."/>
            <person name="Tessner T.G."/>
            <person name="Copeland N.G."/>
            <person name="Jackowski S."/>
        </authorList>
    </citation>
    <scope>NUCLEOTIDE SEQUENCE [MRNA]</scope>
    <source>
        <strain>BALB/cJ</strain>
        <tissue>Testis</tissue>
    </source>
</reference>
<reference key="2">
    <citation type="journal article" date="1994" name="Biochim. Biophys. Acta">
        <title>Primary structure and expression of a human CTP:phosphocholine cytidylyltransferase.</title>
        <authorList>
            <person name="Kalmar G.B."/>
            <person name="Kay R.J."/>
            <person name="Lachance A.C."/>
            <person name="Cornell R.B."/>
        </authorList>
    </citation>
    <scope>NUCLEOTIDE SEQUENCE [MRNA]</scope>
</reference>
<reference key="3">
    <citation type="journal article" date="1997" name="J. Biol. Chem.">
        <title>The structure of the gene for murine CTP:phosphocholine cytidylyltransferase, Ctpct. Relationship of exon structure to functional domains and identification of transcriptional start sites and potential upstream regulatory elements.</title>
        <authorList>
            <person name="Tang W."/>
            <person name="Keesler G.A."/>
            <person name="Tabas I."/>
        </authorList>
    </citation>
    <scope>NUCLEOTIDE SEQUENCE [GENOMIC DNA]</scope>
    <source>
        <strain>129/J</strain>
    </source>
</reference>
<reference key="4">
    <citation type="journal article" date="2005" name="Science">
        <title>The transcriptional landscape of the mammalian genome.</title>
        <authorList>
            <person name="Carninci P."/>
            <person name="Kasukawa T."/>
            <person name="Katayama S."/>
            <person name="Gough J."/>
            <person name="Frith M.C."/>
            <person name="Maeda N."/>
            <person name="Oyama R."/>
            <person name="Ravasi T."/>
            <person name="Lenhard B."/>
            <person name="Wells C."/>
            <person name="Kodzius R."/>
            <person name="Shimokawa K."/>
            <person name="Bajic V.B."/>
            <person name="Brenner S.E."/>
            <person name="Batalov S."/>
            <person name="Forrest A.R."/>
            <person name="Zavolan M."/>
            <person name="Davis M.J."/>
            <person name="Wilming L.G."/>
            <person name="Aidinis V."/>
            <person name="Allen J.E."/>
            <person name="Ambesi-Impiombato A."/>
            <person name="Apweiler R."/>
            <person name="Aturaliya R.N."/>
            <person name="Bailey T.L."/>
            <person name="Bansal M."/>
            <person name="Baxter L."/>
            <person name="Beisel K.W."/>
            <person name="Bersano T."/>
            <person name="Bono H."/>
            <person name="Chalk A.M."/>
            <person name="Chiu K.P."/>
            <person name="Choudhary V."/>
            <person name="Christoffels A."/>
            <person name="Clutterbuck D.R."/>
            <person name="Crowe M.L."/>
            <person name="Dalla E."/>
            <person name="Dalrymple B.P."/>
            <person name="de Bono B."/>
            <person name="Della Gatta G."/>
            <person name="di Bernardo D."/>
            <person name="Down T."/>
            <person name="Engstrom P."/>
            <person name="Fagiolini M."/>
            <person name="Faulkner G."/>
            <person name="Fletcher C.F."/>
            <person name="Fukushima T."/>
            <person name="Furuno M."/>
            <person name="Futaki S."/>
            <person name="Gariboldi M."/>
            <person name="Georgii-Hemming P."/>
            <person name="Gingeras T.R."/>
            <person name="Gojobori T."/>
            <person name="Green R.E."/>
            <person name="Gustincich S."/>
            <person name="Harbers M."/>
            <person name="Hayashi Y."/>
            <person name="Hensch T.K."/>
            <person name="Hirokawa N."/>
            <person name="Hill D."/>
            <person name="Huminiecki L."/>
            <person name="Iacono M."/>
            <person name="Ikeo K."/>
            <person name="Iwama A."/>
            <person name="Ishikawa T."/>
            <person name="Jakt M."/>
            <person name="Kanapin A."/>
            <person name="Katoh M."/>
            <person name="Kawasawa Y."/>
            <person name="Kelso J."/>
            <person name="Kitamura H."/>
            <person name="Kitano H."/>
            <person name="Kollias G."/>
            <person name="Krishnan S.P."/>
            <person name="Kruger A."/>
            <person name="Kummerfeld S.K."/>
            <person name="Kurochkin I.V."/>
            <person name="Lareau L.F."/>
            <person name="Lazarevic D."/>
            <person name="Lipovich L."/>
            <person name="Liu J."/>
            <person name="Liuni S."/>
            <person name="McWilliam S."/>
            <person name="Madan Babu M."/>
            <person name="Madera M."/>
            <person name="Marchionni L."/>
            <person name="Matsuda H."/>
            <person name="Matsuzawa S."/>
            <person name="Miki H."/>
            <person name="Mignone F."/>
            <person name="Miyake S."/>
            <person name="Morris K."/>
            <person name="Mottagui-Tabar S."/>
            <person name="Mulder N."/>
            <person name="Nakano N."/>
            <person name="Nakauchi H."/>
            <person name="Ng P."/>
            <person name="Nilsson R."/>
            <person name="Nishiguchi S."/>
            <person name="Nishikawa S."/>
            <person name="Nori F."/>
            <person name="Ohara O."/>
            <person name="Okazaki Y."/>
            <person name="Orlando V."/>
            <person name="Pang K.C."/>
            <person name="Pavan W.J."/>
            <person name="Pavesi G."/>
            <person name="Pesole G."/>
            <person name="Petrovsky N."/>
            <person name="Piazza S."/>
            <person name="Reed J."/>
            <person name="Reid J.F."/>
            <person name="Ring B.Z."/>
            <person name="Ringwald M."/>
            <person name="Rost B."/>
            <person name="Ruan Y."/>
            <person name="Salzberg S.L."/>
            <person name="Sandelin A."/>
            <person name="Schneider C."/>
            <person name="Schoenbach C."/>
            <person name="Sekiguchi K."/>
            <person name="Semple C.A."/>
            <person name="Seno S."/>
            <person name="Sessa L."/>
            <person name="Sheng Y."/>
            <person name="Shibata Y."/>
            <person name="Shimada H."/>
            <person name="Shimada K."/>
            <person name="Silva D."/>
            <person name="Sinclair B."/>
            <person name="Sperling S."/>
            <person name="Stupka E."/>
            <person name="Sugiura K."/>
            <person name="Sultana R."/>
            <person name="Takenaka Y."/>
            <person name="Taki K."/>
            <person name="Tammoja K."/>
            <person name="Tan S.L."/>
            <person name="Tang S."/>
            <person name="Taylor M.S."/>
            <person name="Tegner J."/>
            <person name="Teichmann S.A."/>
            <person name="Ueda H.R."/>
            <person name="van Nimwegen E."/>
            <person name="Verardo R."/>
            <person name="Wei C.L."/>
            <person name="Yagi K."/>
            <person name="Yamanishi H."/>
            <person name="Zabarovsky E."/>
            <person name="Zhu S."/>
            <person name="Zimmer A."/>
            <person name="Hide W."/>
            <person name="Bult C."/>
            <person name="Grimmond S.M."/>
            <person name="Teasdale R.D."/>
            <person name="Liu E.T."/>
            <person name="Brusic V."/>
            <person name="Quackenbush J."/>
            <person name="Wahlestedt C."/>
            <person name="Mattick J.S."/>
            <person name="Hume D.A."/>
            <person name="Kai C."/>
            <person name="Sasaki D."/>
            <person name="Tomaru Y."/>
            <person name="Fukuda S."/>
            <person name="Kanamori-Katayama M."/>
            <person name="Suzuki M."/>
            <person name="Aoki J."/>
            <person name="Arakawa T."/>
            <person name="Iida J."/>
            <person name="Imamura K."/>
            <person name="Itoh M."/>
            <person name="Kato T."/>
            <person name="Kawaji H."/>
            <person name="Kawagashira N."/>
            <person name="Kawashima T."/>
            <person name="Kojima M."/>
            <person name="Kondo S."/>
            <person name="Konno H."/>
            <person name="Nakano K."/>
            <person name="Ninomiya N."/>
            <person name="Nishio T."/>
            <person name="Okada M."/>
            <person name="Plessy C."/>
            <person name="Shibata K."/>
            <person name="Shiraki T."/>
            <person name="Suzuki S."/>
            <person name="Tagami M."/>
            <person name="Waki K."/>
            <person name="Watahiki A."/>
            <person name="Okamura-Oho Y."/>
            <person name="Suzuki H."/>
            <person name="Kawai J."/>
            <person name="Hayashizaki Y."/>
        </authorList>
    </citation>
    <scope>NUCLEOTIDE SEQUENCE [LARGE SCALE MRNA]</scope>
    <source>
        <strain>C57BL/6J</strain>
        <tissue>Testis</tissue>
    </source>
</reference>
<reference key="5">
    <citation type="journal article" date="2004" name="Genome Res.">
        <title>The status, quality, and expansion of the NIH full-length cDNA project: the Mammalian Gene Collection (MGC).</title>
        <authorList>
            <consortium name="The MGC Project Team"/>
        </authorList>
    </citation>
    <scope>NUCLEOTIDE SEQUENCE [LARGE SCALE MRNA]</scope>
    <source>
        <strain>FVB/N</strain>
        <tissue>Liver</tissue>
    </source>
</reference>
<reference key="6">
    <citation type="journal article" date="2003" name="Biochim. Biophys. Acta">
        <title>Gene structure, expression and identification of a new CTP:phosphocholine cytidylyltransferase beta isoform.</title>
        <authorList>
            <person name="Karim M."/>
            <person name="Jackson P."/>
            <person name="Jackowski S."/>
        </authorList>
    </citation>
    <scope>FUNCTION</scope>
    <scope>CATALYTIC ACTIVITY</scope>
    <scope>TISSUE SPECIFICITY</scope>
</reference>
<reference key="7">
    <citation type="journal article" date="2005" name="Mol. Cell. Biol.">
        <title>Early embryonic lethality in mice with targeted deletion of the CTP:phosphocholine cytidylyltransferase alpha gene (Pcyt1a).</title>
        <authorList>
            <person name="Wang L."/>
            <person name="Magdaleno S."/>
            <person name="Tabas I."/>
            <person name="Jackowski S."/>
        </authorList>
    </citation>
    <scope>DISRUPTION PHENOTYPE</scope>
</reference>
<reference key="8">
    <citation type="journal article" date="2007" name="Proc. Natl. Acad. Sci. U.S.A.">
        <title>Large-scale phosphorylation analysis of mouse liver.</title>
        <authorList>
            <person name="Villen J."/>
            <person name="Beausoleil S.A."/>
            <person name="Gerber S.A."/>
            <person name="Gygi S.P."/>
        </authorList>
    </citation>
    <scope>PHOSPHORYLATION [LARGE SCALE ANALYSIS] AT SER-347</scope>
    <scope>IDENTIFICATION BY MASS SPECTROMETRY [LARGE SCALE ANALYSIS]</scope>
    <source>
        <tissue>Liver</tissue>
    </source>
</reference>
<reference key="9">
    <citation type="journal article" date="2009" name="Mol. Cell. Proteomics">
        <title>Large scale localization of protein phosphorylation by use of electron capture dissociation mass spectrometry.</title>
        <authorList>
            <person name="Sweet S.M."/>
            <person name="Bailey C.M."/>
            <person name="Cunningham D.L."/>
            <person name="Heath J.K."/>
            <person name="Cooper H.J."/>
        </authorList>
    </citation>
    <scope>PHOSPHORYLATION [LARGE SCALE ANALYSIS] AT SER-362</scope>
    <scope>IDENTIFICATION BY MASS SPECTROMETRY [LARGE SCALE ANALYSIS]</scope>
    <source>
        <tissue>Embryonic fibroblast</tissue>
    </source>
</reference>
<reference key="10">
    <citation type="journal article" date="2009" name="J. Biol. Chem.">
        <title>CTP:phosphocholine cytidylyltransferase alpha is required for B-cell proliferation and class switch recombination.</title>
        <authorList>
            <person name="Fagone P."/>
            <person name="Gunter C."/>
            <person name="Sage C.R."/>
            <person name="Gunn K.E."/>
            <person name="Brewer J.W."/>
            <person name="Jackowski S."/>
        </authorList>
    </citation>
    <scope>DISRUPTION PHENOTYPE</scope>
</reference>
<reference key="11">
    <citation type="journal article" date="2010" name="Cell">
        <title>A tissue-specific atlas of mouse protein phosphorylation and expression.</title>
        <authorList>
            <person name="Huttlin E.L."/>
            <person name="Jedrychowski M.P."/>
            <person name="Elias J.E."/>
            <person name="Goswami T."/>
            <person name="Rad R."/>
            <person name="Beausoleil S.A."/>
            <person name="Villen J."/>
            <person name="Haas W."/>
            <person name="Sowa M.E."/>
            <person name="Gygi S.P."/>
        </authorList>
    </citation>
    <scope>PHOSPHORYLATION [LARGE SCALE ANALYSIS] AT SER-315; SER-319; SER-323; THR-325; SER-331; THR-342; SER-343; SER-347; THR-358 AND SER-362</scope>
    <scope>IDENTIFICATION BY MASS SPECTROMETRY [LARGE SCALE ANALYSIS]</scope>
    <source>
        <tissue>Brain</tissue>
        <tissue>Brown adipose tissue</tissue>
        <tissue>Heart</tissue>
        <tissue>Kidney</tissue>
        <tissue>Liver</tissue>
        <tissue>Lung</tissue>
        <tissue>Pancreas</tissue>
        <tissue>Spleen</tissue>
        <tissue>Testis</tissue>
    </source>
</reference>
<reference key="12">
    <citation type="journal article" date="2011" name="Mol. Cell. Biol.">
        <title>Calmodulin antagonizes a calcium-activated SCF ubiquitin E3 ligase subunit, FBXL2, to regulate surfactant homeostasis.</title>
        <authorList>
            <person name="Chen B.B."/>
            <person name="Coon T.A."/>
            <person name="Glasser J.R."/>
            <person name="Mallampalli R.K."/>
        </authorList>
    </citation>
    <scope>UBIQUITINATION BY SCF(FBXL2)</scope>
</reference>
<gene>
    <name type="primary">Pcyt1a</name>
    <name type="synonym">Ctpct</name>
    <name type="synonym">Pcyt1</name>
</gene>
<comment type="function">
    <text evidence="5">Catalyzes the key rate-limiting step in the CDP-choline pathway for phosphatidylcholine biosynthesis.</text>
</comment>
<comment type="catalytic activity">
    <reaction evidence="5">
        <text>phosphocholine + CTP + H(+) = CDP-choline + diphosphate</text>
        <dbReference type="Rhea" id="RHEA:18997"/>
        <dbReference type="ChEBI" id="CHEBI:15378"/>
        <dbReference type="ChEBI" id="CHEBI:33019"/>
        <dbReference type="ChEBI" id="CHEBI:37563"/>
        <dbReference type="ChEBI" id="CHEBI:58779"/>
        <dbReference type="ChEBI" id="CHEBI:295975"/>
        <dbReference type="EC" id="2.7.7.15"/>
    </reaction>
    <physiologicalReaction direction="left-to-right" evidence="5">
        <dbReference type="Rhea" id="RHEA:18998"/>
    </physiologicalReaction>
</comment>
<comment type="activity regulation">
    <text evidence="1">Interconverts between an inactive cytosolic form and an active membrane-bound form. Activation involves disruption of an inhibitory interaction between helices at the base of the active site and the autoinhibitory (AI) region.</text>
</comment>
<comment type="pathway">
    <text evidence="5">Phospholipid metabolism; phosphatidylcholine biosynthesis; phosphatidylcholine from phosphocholine: step 1/2.</text>
</comment>
<comment type="subunit">
    <text evidence="1">Homodimer.</text>
</comment>
<comment type="subcellular location">
    <subcellularLocation>
        <location evidence="1">Cytoplasm</location>
        <location evidence="1">Cytosol</location>
    </subcellularLocation>
    <subcellularLocation>
        <location evidence="1">Membrane</location>
        <topology evidence="1">Peripheral membrane protein</topology>
    </subcellularLocation>
    <subcellularLocation>
        <location evidence="2">Endoplasmic reticulum membrane</location>
        <topology evidence="1">Peripheral membrane protein</topology>
    </subcellularLocation>
    <subcellularLocation>
        <location evidence="2">Nucleus</location>
    </subcellularLocation>
    <text evidence="1">It can interconvert between an inactive cytosolic form and an active membrane-bound form.</text>
</comment>
<comment type="tissue specificity">
    <text evidence="5">Brain and liver (at protein level) (PubMed:12842190). Also found in heart, kidney, spleen, lung, skeletal muscle, ovary and testis (PubMed:12842190).</text>
</comment>
<comment type="PTM">
    <text evidence="1">The serine residues of the C-terminus are phosphorylated. The inactive soluble form is stabilized by phosphorylation, the active membrane bound form is promoted by anionic lipids or diacylglycerol, and is stabilized by dephosphorylation (By similarity).</text>
</comment>
<comment type="PTM">
    <text evidence="8">Monoubiquitinated by the SCF(FBXL2) complex, leading to proteasomal degradation.</text>
</comment>
<comment type="disruption phenotype">
    <text evidence="6 7">Early embryonic lethality: zygotes do not form blastocysts, do not develop past 3.5 days post coitum (dpc), and fail to implant (PubMed:15798219). Mice with a conditional deletion in B-cells show defects in B-cell proliferation and class switch recombination (PubMed:19139091).</text>
</comment>
<comment type="similarity">
    <text evidence="9">Belongs to the cytidylyltransferase family.</text>
</comment>
<name>PCY1A_MOUSE</name>
<keyword id="KW-0007">Acetylation</keyword>
<keyword id="KW-0963">Cytoplasm</keyword>
<keyword id="KW-0256">Endoplasmic reticulum</keyword>
<keyword id="KW-0444">Lipid biosynthesis</keyword>
<keyword id="KW-0443">Lipid metabolism</keyword>
<keyword id="KW-0472">Membrane</keyword>
<keyword id="KW-0548">Nucleotidyltransferase</keyword>
<keyword id="KW-0539">Nucleus</keyword>
<keyword id="KW-0594">Phospholipid biosynthesis</keyword>
<keyword id="KW-1208">Phospholipid metabolism</keyword>
<keyword id="KW-0597">Phosphoprotein</keyword>
<keyword id="KW-1185">Reference proteome</keyword>
<keyword id="KW-0677">Repeat</keyword>
<keyword id="KW-0808">Transferase</keyword>
<keyword id="KW-0832">Ubl conjugation</keyword>
<accession>P49586</accession>
<accession>Q542W4</accession>
<protein>
    <recommendedName>
        <fullName>Choline-phosphate cytidylyltransferase A</fullName>
        <ecNumber evidence="5">2.7.7.15</ecNumber>
    </recommendedName>
    <alternativeName>
        <fullName>CCT-alpha</fullName>
    </alternativeName>
    <alternativeName>
        <fullName>CTP:phosphocholine cytidylyltransferase A</fullName>
        <shortName>CCT A</shortName>
        <shortName>CT A</shortName>
    </alternativeName>
    <alternativeName>
        <fullName>Phosphorylcholine transferase A</fullName>
    </alternativeName>
</protein>
<organism>
    <name type="scientific">Mus musculus</name>
    <name type="common">Mouse</name>
    <dbReference type="NCBI Taxonomy" id="10090"/>
    <lineage>
        <taxon>Eukaryota</taxon>
        <taxon>Metazoa</taxon>
        <taxon>Chordata</taxon>
        <taxon>Craniata</taxon>
        <taxon>Vertebrata</taxon>
        <taxon>Euteleostomi</taxon>
        <taxon>Mammalia</taxon>
        <taxon>Eutheria</taxon>
        <taxon>Euarchontoglires</taxon>
        <taxon>Glires</taxon>
        <taxon>Rodentia</taxon>
        <taxon>Myomorpha</taxon>
        <taxon>Muroidea</taxon>
        <taxon>Muridae</taxon>
        <taxon>Murinae</taxon>
        <taxon>Mus</taxon>
        <taxon>Mus</taxon>
    </lineage>
</organism>
<proteinExistence type="evidence at protein level"/>
<dbReference type="EC" id="2.7.7.15" evidence="5"/>
<dbReference type="EMBL" id="Z12302">
    <property type="protein sequence ID" value="CAA78172.1"/>
    <property type="molecule type" value="mRNA"/>
</dbReference>
<dbReference type="EMBL" id="L28956">
    <property type="protein sequence ID" value="AAA53526.1"/>
    <property type="molecule type" value="mRNA"/>
</dbReference>
<dbReference type="EMBL" id="U84207">
    <property type="protein sequence ID" value="AAB63446.1"/>
    <property type="molecule type" value="Genomic_DNA"/>
</dbReference>
<dbReference type="EMBL" id="U84200">
    <property type="protein sequence ID" value="AAB63446.1"/>
    <property type="status" value="JOINED"/>
    <property type="molecule type" value="Genomic_DNA"/>
</dbReference>
<dbReference type="EMBL" id="U84201">
    <property type="protein sequence ID" value="AAB63446.1"/>
    <property type="status" value="JOINED"/>
    <property type="molecule type" value="Genomic_DNA"/>
</dbReference>
<dbReference type="EMBL" id="U84202">
    <property type="protein sequence ID" value="AAB63446.1"/>
    <property type="status" value="JOINED"/>
    <property type="molecule type" value="Genomic_DNA"/>
</dbReference>
<dbReference type="EMBL" id="U84203">
    <property type="protein sequence ID" value="AAB63446.1"/>
    <property type="status" value="JOINED"/>
    <property type="molecule type" value="Genomic_DNA"/>
</dbReference>
<dbReference type="EMBL" id="U84204">
    <property type="protein sequence ID" value="AAB63446.1"/>
    <property type="status" value="JOINED"/>
    <property type="molecule type" value="Genomic_DNA"/>
</dbReference>
<dbReference type="EMBL" id="U84205">
    <property type="protein sequence ID" value="AAB63446.1"/>
    <property type="status" value="JOINED"/>
    <property type="molecule type" value="Genomic_DNA"/>
</dbReference>
<dbReference type="EMBL" id="U84206">
    <property type="protein sequence ID" value="AAB63446.1"/>
    <property type="status" value="JOINED"/>
    <property type="molecule type" value="Genomic_DNA"/>
</dbReference>
<dbReference type="EMBL" id="AK076050">
    <property type="protein sequence ID" value="BAC36148.1"/>
    <property type="molecule type" value="mRNA"/>
</dbReference>
<dbReference type="EMBL" id="AK076830">
    <property type="protein sequence ID" value="BAC36497.1"/>
    <property type="molecule type" value="mRNA"/>
</dbReference>
<dbReference type="EMBL" id="BC018313">
    <property type="protein sequence ID" value="AAH18313.1"/>
    <property type="molecule type" value="mRNA"/>
</dbReference>
<dbReference type="CCDS" id="CCDS28120.1"/>
<dbReference type="PIR" id="A49366">
    <property type="entry name" value="S24935"/>
</dbReference>
<dbReference type="RefSeq" id="NP_001156631.1">
    <property type="nucleotide sequence ID" value="NM_001163159.1"/>
</dbReference>
<dbReference type="RefSeq" id="NP_001156632.1">
    <property type="nucleotide sequence ID" value="NM_001163160.1"/>
</dbReference>
<dbReference type="RefSeq" id="NP_034111.1">
    <property type="nucleotide sequence ID" value="NM_009981.4"/>
</dbReference>
<dbReference type="SMR" id="P49586"/>
<dbReference type="BioGRID" id="198967">
    <property type="interactions" value="5"/>
</dbReference>
<dbReference type="FunCoup" id="P49586">
    <property type="interactions" value="2533"/>
</dbReference>
<dbReference type="IntAct" id="P49586">
    <property type="interactions" value="1"/>
</dbReference>
<dbReference type="MINT" id="P49586"/>
<dbReference type="STRING" id="10090.ENSMUSP00000078721"/>
<dbReference type="GlyGen" id="P49586">
    <property type="glycosylation" value="1 site, 1 O-linked glycan (1 site)"/>
</dbReference>
<dbReference type="iPTMnet" id="P49586"/>
<dbReference type="PhosphoSitePlus" id="P49586"/>
<dbReference type="SwissPalm" id="P49586"/>
<dbReference type="jPOST" id="P49586"/>
<dbReference type="PaxDb" id="10090-ENSMUSP00000130056"/>
<dbReference type="PeptideAtlas" id="P49586"/>
<dbReference type="ProteomicsDB" id="287980"/>
<dbReference type="Pumba" id="P49586"/>
<dbReference type="Antibodypedia" id="33936">
    <property type="antibodies" value="238 antibodies from 30 providers"/>
</dbReference>
<dbReference type="DNASU" id="13026"/>
<dbReference type="Ensembl" id="ENSMUST00000079791.11">
    <property type="protein sequence ID" value="ENSMUSP00000078721.5"/>
    <property type="gene ID" value="ENSMUSG00000005615.16"/>
</dbReference>
<dbReference type="Ensembl" id="ENSMUST00000104893.10">
    <property type="protein sequence ID" value="ENSMUSP00000130056.2"/>
    <property type="gene ID" value="ENSMUSG00000005615.16"/>
</dbReference>
<dbReference type="Ensembl" id="ENSMUST00000115140.2">
    <property type="protein sequence ID" value="ENSMUSP00000110793.2"/>
    <property type="gene ID" value="ENSMUSG00000005615.16"/>
</dbReference>
<dbReference type="GeneID" id="13026"/>
<dbReference type="KEGG" id="mmu:13026"/>
<dbReference type="UCSC" id="uc007yyw.2">
    <property type="organism name" value="mouse"/>
</dbReference>
<dbReference type="AGR" id="MGI:88557"/>
<dbReference type="CTD" id="5130"/>
<dbReference type="MGI" id="MGI:88557">
    <property type="gene designation" value="Pcyt1a"/>
</dbReference>
<dbReference type="VEuPathDB" id="HostDB:ENSMUSG00000005615"/>
<dbReference type="eggNOG" id="KOG2804">
    <property type="taxonomic scope" value="Eukaryota"/>
</dbReference>
<dbReference type="GeneTree" id="ENSGT00940000157384"/>
<dbReference type="HOGENOM" id="CLU_034585_4_2_1"/>
<dbReference type="InParanoid" id="P49586"/>
<dbReference type="OMA" id="IWRESKG"/>
<dbReference type="OrthoDB" id="17102at2759"/>
<dbReference type="PhylomeDB" id="P49586"/>
<dbReference type="TreeFam" id="TF106336"/>
<dbReference type="BRENDA" id="2.7.7.15">
    <property type="organism ID" value="3474"/>
</dbReference>
<dbReference type="Reactome" id="R-MMU-1483191">
    <property type="pathway name" value="Synthesis of PC"/>
</dbReference>
<dbReference type="UniPathway" id="UPA00753">
    <property type="reaction ID" value="UER00739"/>
</dbReference>
<dbReference type="BioGRID-ORCS" id="13026">
    <property type="hits" value="21 hits in 82 CRISPR screens"/>
</dbReference>
<dbReference type="ChiTaRS" id="Pcyt1a">
    <property type="organism name" value="mouse"/>
</dbReference>
<dbReference type="PRO" id="PR:P49586"/>
<dbReference type="Proteomes" id="UP000000589">
    <property type="component" value="Chromosome 16"/>
</dbReference>
<dbReference type="RNAct" id="P49586">
    <property type="molecule type" value="protein"/>
</dbReference>
<dbReference type="Bgee" id="ENSMUSG00000005615">
    <property type="expression patterns" value="Expressed in small intestine Peyer's patch and 261 other cell types or tissues"/>
</dbReference>
<dbReference type="ExpressionAtlas" id="P49586">
    <property type="expression patterns" value="baseline and differential"/>
</dbReference>
<dbReference type="GO" id="GO:0005829">
    <property type="term" value="C:cytosol"/>
    <property type="evidence" value="ECO:0007669"/>
    <property type="project" value="UniProtKB-SubCell"/>
</dbReference>
<dbReference type="GO" id="GO:0005789">
    <property type="term" value="C:endoplasmic reticulum membrane"/>
    <property type="evidence" value="ECO:0000314"/>
    <property type="project" value="MGI"/>
</dbReference>
<dbReference type="GO" id="GO:0042587">
    <property type="term" value="C:glycogen granule"/>
    <property type="evidence" value="ECO:0000314"/>
    <property type="project" value="MGI"/>
</dbReference>
<dbReference type="GO" id="GO:0005635">
    <property type="term" value="C:nuclear envelope"/>
    <property type="evidence" value="ECO:0007669"/>
    <property type="project" value="Ensembl"/>
</dbReference>
<dbReference type="GO" id="GO:0005516">
    <property type="term" value="F:calmodulin binding"/>
    <property type="evidence" value="ECO:0007669"/>
    <property type="project" value="Ensembl"/>
</dbReference>
<dbReference type="GO" id="GO:0004105">
    <property type="term" value="F:choline-phosphate cytidylyltransferase activity"/>
    <property type="evidence" value="ECO:0000314"/>
    <property type="project" value="UniProtKB"/>
</dbReference>
<dbReference type="GO" id="GO:0140678">
    <property type="term" value="F:molecular function inhibitor activity"/>
    <property type="evidence" value="ECO:0007669"/>
    <property type="project" value="Ensembl"/>
</dbReference>
<dbReference type="GO" id="GO:0031210">
    <property type="term" value="F:phosphatidylcholine binding"/>
    <property type="evidence" value="ECO:0007669"/>
    <property type="project" value="Ensembl"/>
</dbReference>
<dbReference type="GO" id="GO:0042803">
    <property type="term" value="F:protein homodimerization activity"/>
    <property type="evidence" value="ECO:0007669"/>
    <property type="project" value="Ensembl"/>
</dbReference>
<dbReference type="GO" id="GO:0042100">
    <property type="term" value="P:B cell proliferation"/>
    <property type="evidence" value="ECO:0000315"/>
    <property type="project" value="UniProtKB"/>
</dbReference>
<dbReference type="GO" id="GO:0006657">
    <property type="term" value="P:CDP-choline pathway"/>
    <property type="evidence" value="ECO:0000314"/>
    <property type="project" value="UniProtKB"/>
</dbReference>
<dbReference type="GO" id="GO:0045190">
    <property type="term" value="P:isotype switching"/>
    <property type="evidence" value="ECO:0000315"/>
    <property type="project" value="UniProtKB"/>
</dbReference>
<dbReference type="GO" id="GO:0006656">
    <property type="term" value="P:phosphatidylcholine biosynthetic process"/>
    <property type="evidence" value="ECO:0000314"/>
    <property type="project" value="UniProtKB"/>
</dbReference>
<dbReference type="CDD" id="cd02174">
    <property type="entry name" value="CCT"/>
    <property type="match status" value="1"/>
</dbReference>
<dbReference type="FunFam" id="3.40.50.620:FF:000016">
    <property type="entry name" value="Putative choline-phosphate cytidylyltransferase B"/>
    <property type="match status" value="1"/>
</dbReference>
<dbReference type="Gene3D" id="3.40.50.620">
    <property type="entry name" value="HUPs"/>
    <property type="match status" value="1"/>
</dbReference>
<dbReference type="InterPro" id="IPR041723">
    <property type="entry name" value="CCT"/>
</dbReference>
<dbReference type="InterPro" id="IPR004821">
    <property type="entry name" value="Cyt_trans-like"/>
</dbReference>
<dbReference type="InterPro" id="IPR045049">
    <property type="entry name" value="Pcy1-like"/>
</dbReference>
<dbReference type="InterPro" id="IPR014729">
    <property type="entry name" value="Rossmann-like_a/b/a_fold"/>
</dbReference>
<dbReference type="NCBIfam" id="TIGR00125">
    <property type="entry name" value="cyt_tran_rel"/>
    <property type="match status" value="1"/>
</dbReference>
<dbReference type="PANTHER" id="PTHR10739:SF19">
    <property type="entry name" value="CHOLINE-PHOSPHATE CYTIDYLYLTRANSFERASE A"/>
    <property type="match status" value="1"/>
</dbReference>
<dbReference type="PANTHER" id="PTHR10739">
    <property type="entry name" value="CYTIDYLYLTRANSFERASE"/>
    <property type="match status" value="1"/>
</dbReference>
<dbReference type="Pfam" id="PF01467">
    <property type="entry name" value="CTP_transf_like"/>
    <property type="match status" value="1"/>
</dbReference>
<dbReference type="SUPFAM" id="SSF52374">
    <property type="entry name" value="Nucleotidylyl transferase"/>
    <property type="match status" value="1"/>
</dbReference>
<evidence type="ECO:0000250" key="1">
    <source>
        <dbReference type="UniProtKB" id="P19836"/>
    </source>
</evidence>
<evidence type="ECO:0000250" key="2">
    <source>
        <dbReference type="UniProtKB" id="P49585"/>
    </source>
</evidence>
<evidence type="ECO:0000255" key="3"/>
<evidence type="ECO:0000256" key="4">
    <source>
        <dbReference type="SAM" id="MobiDB-lite"/>
    </source>
</evidence>
<evidence type="ECO:0000269" key="5">
    <source>
    </source>
</evidence>
<evidence type="ECO:0000269" key="6">
    <source>
    </source>
</evidence>
<evidence type="ECO:0000269" key="7">
    <source>
    </source>
</evidence>
<evidence type="ECO:0000269" key="8">
    <source>
    </source>
</evidence>
<evidence type="ECO:0000305" key="9"/>
<evidence type="ECO:0007744" key="10">
    <source>
    </source>
</evidence>
<evidence type="ECO:0007744" key="11">
    <source>
    </source>
</evidence>
<evidence type="ECO:0007744" key="12">
    <source>
    </source>
</evidence>
<sequence>MDAQSSAKVNSRKRRKEAPGPNGATEEDGIPSKVQRCAVGLRQPAPFSDEIEVDFSKPYVRVTMEEACRGTPCERPVRVYADGIFDLFHSGHARALMQAKNLFPNTYLIVGVCSDELTHNFKGFTVMNENERYDAVQHCRYVDEVVRNAPWTLTPEFLAEHRIDFVAHDDIPYSSAGSDDVYKHIKDAGMFAPTQRTEGISTSDIITRIVRDYDVYARRNLQRGYTAKELNVSFINEKKYHLQERVDKVKKKVKDVEEKSKEFVQKVEEKSIDLIQKWEEKSREFIGSFLEMFGPEGALKHMLKEGKGRMLQAISPKQSPSSSPTHERSPSPSFRWPFSGKTSPSSSPASLSRCRAVTCDISEDEED</sequence>